<dbReference type="EC" id="6.3.5.-" evidence="1"/>
<dbReference type="EMBL" id="CU458896">
    <property type="protein sequence ID" value="CAM63418.1"/>
    <property type="molecule type" value="Genomic_DNA"/>
</dbReference>
<dbReference type="RefSeq" id="WP_005056788.1">
    <property type="nucleotide sequence ID" value="NZ_MLCG01000001.1"/>
</dbReference>
<dbReference type="SMR" id="B1MDU9"/>
<dbReference type="GeneID" id="93380278"/>
<dbReference type="KEGG" id="mab:MAB_3342c"/>
<dbReference type="Proteomes" id="UP000007137">
    <property type="component" value="Chromosome"/>
</dbReference>
<dbReference type="GO" id="GO:0050566">
    <property type="term" value="F:asparaginyl-tRNA synthase (glutamine-hydrolyzing) activity"/>
    <property type="evidence" value="ECO:0007669"/>
    <property type="project" value="RHEA"/>
</dbReference>
<dbReference type="GO" id="GO:0005524">
    <property type="term" value="F:ATP binding"/>
    <property type="evidence" value="ECO:0007669"/>
    <property type="project" value="UniProtKB-KW"/>
</dbReference>
<dbReference type="GO" id="GO:0050567">
    <property type="term" value="F:glutaminyl-tRNA synthase (glutamine-hydrolyzing) activity"/>
    <property type="evidence" value="ECO:0007669"/>
    <property type="project" value="UniProtKB-UniRule"/>
</dbReference>
<dbReference type="GO" id="GO:0070681">
    <property type="term" value="P:glutaminyl-tRNAGln biosynthesis via transamidation"/>
    <property type="evidence" value="ECO:0007669"/>
    <property type="project" value="TreeGrafter"/>
</dbReference>
<dbReference type="GO" id="GO:0006450">
    <property type="term" value="P:regulation of translational fidelity"/>
    <property type="evidence" value="ECO:0007669"/>
    <property type="project" value="InterPro"/>
</dbReference>
<dbReference type="GO" id="GO:0006412">
    <property type="term" value="P:translation"/>
    <property type="evidence" value="ECO:0007669"/>
    <property type="project" value="UniProtKB-UniRule"/>
</dbReference>
<dbReference type="Gene3D" id="1.10.20.60">
    <property type="entry name" value="Glu-tRNAGln amidotransferase C subunit, N-terminal domain"/>
    <property type="match status" value="1"/>
</dbReference>
<dbReference type="HAMAP" id="MF_00122">
    <property type="entry name" value="GatC"/>
    <property type="match status" value="1"/>
</dbReference>
<dbReference type="InterPro" id="IPR036113">
    <property type="entry name" value="Asp/Glu-ADT_sf_sub_c"/>
</dbReference>
<dbReference type="InterPro" id="IPR003837">
    <property type="entry name" value="GatC"/>
</dbReference>
<dbReference type="NCBIfam" id="TIGR00135">
    <property type="entry name" value="gatC"/>
    <property type="match status" value="1"/>
</dbReference>
<dbReference type="PANTHER" id="PTHR15004">
    <property type="entry name" value="GLUTAMYL-TRNA(GLN) AMIDOTRANSFERASE SUBUNIT C, MITOCHONDRIAL"/>
    <property type="match status" value="1"/>
</dbReference>
<dbReference type="PANTHER" id="PTHR15004:SF0">
    <property type="entry name" value="GLUTAMYL-TRNA(GLN) AMIDOTRANSFERASE SUBUNIT C, MITOCHONDRIAL"/>
    <property type="match status" value="1"/>
</dbReference>
<dbReference type="Pfam" id="PF02686">
    <property type="entry name" value="GatC"/>
    <property type="match status" value="1"/>
</dbReference>
<dbReference type="SUPFAM" id="SSF141000">
    <property type="entry name" value="Glu-tRNAGln amidotransferase C subunit"/>
    <property type="match status" value="1"/>
</dbReference>
<feature type="chain" id="PRO_1000095298" description="Aspartyl/glutamyl-tRNA(Asn/Gln) amidotransferase subunit C">
    <location>
        <begin position="1"/>
        <end position="102"/>
    </location>
</feature>
<sequence length="102" mass="10710">MSAISRDEVAHLARLARLALTDAELDGYAGQLDAILGHVSQISAVSTDELDEVDATSSPLDAVNVTRPDVIAECLTPEEALAAAPRVAEGRFAVPQILGEEE</sequence>
<organism>
    <name type="scientific">Mycobacteroides abscessus (strain ATCC 19977 / DSM 44196 / CCUG 20993 / CIP 104536 / JCM 13569 / NCTC 13031 / TMC 1543 / L948)</name>
    <name type="common">Mycobacterium abscessus</name>
    <dbReference type="NCBI Taxonomy" id="561007"/>
    <lineage>
        <taxon>Bacteria</taxon>
        <taxon>Bacillati</taxon>
        <taxon>Actinomycetota</taxon>
        <taxon>Actinomycetes</taxon>
        <taxon>Mycobacteriales</taxon>
        <taxon>Mycobacteriaceae</taxon>
        <taxon>Mycobacteroides</taxon>
        <taxon>Mycobacteroides abscessus</taxon>
    </lineage>
</organism>
<comment type="function">
    <text evidence="1">Allows the formation of correctly charged Asn-tRNA(Asn) or Gln-tRNA(Gln) through the transamidation of misacylated Asp-tRNA(Asn) or Glu-tRNA(Gln) in organisms which lack either or both of asparaginyl-tRNA or glutaminyl-tRNA synthetases. The reaction takes place in the presence of glutamine and ATP through an activated phospho-Asp-tRNA(Asn) or phospho-Glu-tRNA(Gln).</text>
</comment>
<comment type="catalytic activity">
    <reaction evidence="1">
        <text>L-glutamyl-tRNA(Gln) + L-glutamine + ATP + H2O = L-glutaminyl-tRNA(Gln) + L-glutamate + ADP + phosphate + H(+)</text>
        <dbReference type="Rhea" id="RHEA:17521"/>
        <dbReference type="Rhea" id="RHEA-COMP:9681"/>
        <dbReference type="Rhea" id="RHEA-COMP:9684"/>
        <dbReference type="ChEBI" id="CHEBI:15377"/>
        <dbReference type="ChEBI" id="CHEBI:15378"/>
        <dbReference type="ChEBI" id="CHEBI:29985"/>
        <dbReference type="ChEBI" id="CHEBI:30616"/>
        <dbReference type="ChEBI" id="CHEBI:43474"/>
        <dbReference type="ChEBI" id="CHEBI:58359"/>
        <dbReference type="ChEBI" id="CHEBI:78520"/>
        <dbReference type="ChEBI" id="CHEBI:78521"/>
        <dbReference type="ChEBI" id="CHEBI:456216"/>
    </reaction>
</comment>
<comment type="catalytic activity">
    <reaction evidence="1">
        <text>L-aspartyl-tRNA(Asn) + L-glutamine + ATP + H2O = L-asparaginyl-tRNA(Asn) + L-glutamate + ADP + phosphate + 2 H(+)</text>
        <dbReference type="Rhea" id="RHEA:14513"/>
        <dbReference type="Rhea" id="RHEA-COMP:9674"/>
        <dbReference type="Rhea" id="RHEA-COMP:9677"/>
        <dbReference type="ChEBI" id="CHEBI:15377"/>
        <dbReference type="ChEBI" id="CHEBI:15378"/>
        <dbReference type="ChEBI" id="CHEBI:29985"/>
        <dbReference type="ChEBI" id="CHEBI:30616"/>
        <dbReference type="ChEBI" id="CHEBI:43474"/>
        <dbReference type="ChEBI" id="CHEBI:58359"/>
        <dbReference type="ChEBI" id="CHEBI:78515"/>
        <dbReference type="ChEBI" id="CHEBI:78516"/>
        <dbReference type="ChEBI" id="CHEBI:456216"/>
    </reaction>
</comment>
<comment type="subunit">
    <text evidence="1">Heterotrimer of A, B and C subunits.</text>
</comment>
<comment type="similarity">
    <text evidence="1">Belongs to the GatC family.</text>
</comment>
<reference key="1">
    <citation type="journal article" date="2009" name="PLoS ONE">
        <title>Non mycobacterial virulence genes in the genome of the emerging pathogen Mycobacterium abscessus.</title>
        <authorList>
            <person name="Ripoll F."/>
            <person name="Pasek S."/>
            <person name="Schenowitz C."/>
            <person name="Dossat C."/>
            <person name="Barbe V."/>
            <person name="Rottman M."/>
            <person name="Macheras E."/>
            <person name="Heym B."/>
            <person name="Herrmann J.L."/>
            <person name="Daffe M."/>
            <person name="Brosch R."/>
            <person name="Risler J.L."/>
            <person name="Gaillard J.L."/>
        </authorList>
    </citation>
    <scope>NUCLEOTIDE SEQUENCE [LARGE SCALE GENOMIC DNA]</scope>
    <source>
        <strain>ATCC 19977 / DSM 44196 / CCUG 20993 / CIP 104536 / JCM 13569 / NCTC 13031 / TMC 1543 / L948</strain>
    </source>
</reference>
<keyword id="KW-0067">ATP-binding</keyword>
<keyword id="KW-0436">Ligase</keyword>
<keyword id="KW-0547">Nucleotide-binding</keyword>
<keyword id="KW-0648">Protein biosynthesis</keyword>
<keyword id="KW-1185">Reference proteome</keyword>
<proteinExistence type="inferred from homology"/>
<protein>
    <recommendedName>
        <fullName evidence="1">Aspartyl/glutamyl-tRNA(Asn/Gln) amidotransferase subunit C</fullName>
        <shortName evidence="1">Asp/Glu-ADT subunit C</shortName>
        <ecNumber evidence="1">6.3.5.-</ecNumber>
    </recommendedName>
</protein>
<evidence type="ECO:0000255" key="1">
    <source>
        <dbReference type="HAMAP-Rule" id="MF_00122"/>
    </source>
</evidence>
<accession>B1MDU9</accession>
<gene>
    <name evidence="1" type="primary">gatC</name>
    <name type="ordered locus">MAB_3342c</name>
</gene>
<name>GATC_MYCA9</name>